<accession>A9CKM5</accession>
<name>PHNN_AGRFC</name>
<feature type="chain" id="PRO_0000412771" description="Ribose 1,5-bisphosphate phosphokinase PhnN">
    <location>
        <begin position="1"/>
        <end position="183"/>
    </location>
</feature>
<feature type="binding site" evidence="1">
    <location>
        <begin position="6"/>
        <end position="13"/>
    </location>
    <ligand>
        <name>ATP</name>
        <dbReference type="ChEBI" id="CHEBI:30616"/>
    </ligand>
</feature>
<gene>
    <name evidence="1" type="primary">phnN</name>
    <name type="synonym">gmk</name>
    <name type="ordered locus">Atu0168</name>
    <name type="ORF">AGR_C_277</name>
</gene>
<proteinExistence type="inferred from homology"/>
<dbReference type="EC" id="2.7.4.23" evidence="1"/>
<dbReference type="EMBL" id="AE007869">
    <property type="protein sequence ID" value="AAK85987.2"/>
    <property type="molecule type" value="Genomic_DNA"/>
</dbReference>
<dbReference type="RefSeq" id="NP_353202.2">
    <property type="nucleotide sequence ID" value="NC_003062.2"/>
</dbReference>
<dbReference type="SMR" id="A9CKM5"/>
<dbReference type="STRING" id="176299.Atu0168"/>
<dbReference type="EnsemblBacteria" id="AAK85987">
    <property type="protein sequence ID" value="AAK85987"/>
    <property type="gene ID" value="Atu0168"/>
</dbReference>
<dbReference type="KEGG" id="atu:Atu0168"/>
<dbReference type="PATRIC" id="fig|176299.10.peg.158"/>
<dbReference type="eggNOG" id="COG3709">
    <property type="taxonomic scope" value="Bacteria"/>
</dbReference>
<dbReference type="HOGENOM" id="CLU_102477_0_0_5"/>
<dbReference type="OrthoDB" id="341217at2"/>
<dbReference type="PhylomeDB" id="A9CKM5"/>
<dbReference type="UniPathway" id="UPA00087">
    <property type="reaction ID" value="UER00175"/>
</dbReference>
<dbReference type="Proteomes" id="UP000000813">
    <property type="component" value="Chromosome circular"/>
</dbReference>
<dbReference type="GO" id="GO:0005829">
    <property type="term" value="C:cytosol"/>
    <property type="evidence" value="ECO:0007669"/>
    <property type="project" value="TreeGrafter"/>
</dbReference>
<dbReference type="GO" id="GO:0005524">
    <property type="term" value="F:ATP binding"/>
    <property type="evidence" value="ECO:0007669"/>
    <property type="project" value="UniProtKB-KW"/>
</dbReference>
<dbReference type="GO" id="GO:0033863">
    <property type="term" value="F:ribose 1,5-bisphosphate phosphokinase activity"/>
    <property type="evidence" value="ECO:0007669"/>
    <property type="project" value="UniProtKB-UniRule"/>
</dbReference>
<dbReference type="GO" id="GO:0006015">
    <property type="term" value="P:5-phosphoribose 1-diphosphate biosynthetic process"/>
    <property type="evidence" value="ECO:0007669"/>
    <property type="project" value="UniProtKB-UniRule"/>
</dbReference>
<dbReference type="GO" id="GO:0019634">
    <property type="term" value="P:organic phosphonate metabolic process"/>
    <property type="evidence" value="ECO:0007669"/>
    <property type="project" value="UniProtKB-UniRule"/>
</dbReference>
<dbReference type="Gene3D" id="3.40.50.300">
    <property type="entry name" value="P-loop containing nucleotide triphosphate hydrolases"/>
    <property type="match status" value="1"/>
</dbReference>
<dbReference type="HAMAP" id="MF_00836">
    <property type="entry name" value="PhnN"/>
    <property type="match status" value="1"/>
</dbReference>
<dbReference type="InterPro" id="IPR008145">
    <property type="entry name" value="GK/Ca_channel_bsu"/>
</dbReference>
<dbReference type="InterPro" id="IPR008144">
    <property type="entry name" value="Guanylate_kin-like_dom"/>
</dbReference>
<dbReference type="InterPro" id="IPR027417">
    <property type="entry name" value="P-loop_NTPase"/>
</dbReference>
<dbReference type="InterPro" id="IPR012699">
    <property type="entry name" value="PhnN"/>
</dbReference>
<dbReference type="NCBIfam" id="TIGR02322">
    <property type="entry name" value="phosphon_PhnN"/>
    <property type="match status" value="1"/>
</dbReference>
<dbReference type="PANTHER" id="PTHR23117">
    <property type="entry name" value="GUANYLATE KINASE-RELATED"/>
    <property type="match status" value="1"/>
</dbReference>
<dbReference type="PANTHER" id="PTHR23117:SF8">
    <property type="entry name" value="RIBOSE 1,5-BISPHOSPHATE PHOSPHOKINASE PHNN"/>
    <property type="match status" value="1"/>
</dbReference>
<dbReference type="Pfam" id="PF13238">
    <property type="entry name" value="AAA_18"/>
    <property type="match status" value="1"/>
</dbReference>
<dbReference type="SMART" id="SM00072">
    <property type="entry name" value="GuKc"/>
    <property type="match status" value="1"/>
</dbReference>
<dbReference type="SUPFAM" id="SSF52540">
    <property type="entry name" value="P-loop containing nucleoside triphosphate hydrolases"/>
    <property type="match status" value="1"/>
</dbReference>
<dbReference type="PROSITE" id="PS50052">
    <property type="entry name" value="GUANYLATE_KINASE_2"/>
    <property type="match status" value="1"/>
</dbReference>
<reference key="1">
    <citation type="journal article" date="2001" name="Science">
        <title>The genome of the natural genetic engineer Agrobacterium tumefaciens C58.</title>
        <authorList>
            <person name="Wood D.W."/>
            <person name="Setubal J.C."/>
            <person name="Kaul R."/>
            <person name="Monks D.E."/>
            <person name="Kitajima J.P."/>
            <person name="Okura V.K."/>
            <person name="Zhou Y."/>
            <person name="Chen L."/>
            <person name="Wood G.E."/>
            <person name="Almeida N.F. Jr."/>
            <person name="Woo L."/>
            <person name="Chen Y."/>
            <person name="Paulsen I.T."/>
            <person name="Eisen J.A."/>
            <person name="Karp P.D."/>
            <person name="Bovee D. Sr."/>
            <person name="Chapman P."/>
            <person name="Clendenning J."/>
            <person name="Deatherage G."/>
            <person name="Gillet W."/>
            <person name="Grant C."/>
            <person name="Kutyavin T."/>
            <person name="Levy R."/>
            <person name="Li M.-J."/>
            <person name="McClelland E."/>
            <person name="Palmieri A."/>
            <person name="Raymond C."/>
            <person name="Rouse G."/>
            <person name="Saenphimmachak C."/>
            <person name="Wu Z."/>
            <person name="Romero P."/>
            <person name="Gordon D."/>
            <person name="Zhang S."/>
            <person name="Yoo H."/>
            <person name="Tao Y."/>
            <person name="Biddle P."/>
            <person name="Jung M."/>
            <person name="Krespan W."/>
            <person name="Perry M."/>
            <person name="Gordon-Kamm B."/>
            <person name="Liao L."/>
            <person name="Kim S."/>
            <person name="Hendrick C."/>
            <person name="Zhao Z.-Y."/>
            <person name="Dolan M."/>
            <person name="Chumley F."/>
            <person name="Tingey S.V."/>
            <person name="Tomb J.-F."/>
            <person name="Gordon M.P."/>
            <person name="Olson M.V."/>
            <person name="Nester E.W."/>
        </authorList>
    </citation>
    <scope>NUCLEOTIDE SEQUENCE [LARGE SCALE GENOMIC DNA]</scope>
    <source>
        <strain>C58 / ATCC 33970</strain>
    </source>
</reference>
<reference key="2">
    <citation type="journal article" date="2001" name="Science">
        <title>Genome sequence of the plant pathogen and biotechnology agent Agrobacterium tumefaciens C58.</title>
        <authorList>
            <person name="Goodner B."/>
            <person name="Hinkle G."/>
            <person name="Gattung S."/>
            <person name="Miller N."/>
            <person name="Blanchard M."/>
            <person name="Qurollo B."/>
            <person name="Goldman B.S."/>
            <person name="Cao Y."/>
            <person name="Askenazi M."/>
            <person name="Halling C."/>
            <person name="Mullin L."/>
            <person name="Houmiel K."/>
            <person name="Gordon J."/>
            <person name="Vaudin M."/>
            <person name="Iartchouk O."/>
            <person name="Epp A."/>
            <person name="Liu F."/>
            <person name="Wollam C."/>
            <person name="Allinger M."/>
            <person name="Doughty D."/>
            <person name="Scott C."/>
            <person name="Lappas C."/>
            <person name="Markelz B."/>
            <person name="Flanagan C."/>
            <person name="Crowell C."/>
            <person name="Gurson J."/>
            <person name="Lomo C."/>
            <person name="Sear C."/>
            <person name="Strub G."/>
            <person name="Cielo C."/>
            <person name="Slater S."/>
        </authorList>
    </citation>
    <scope>NUCLEOTIDE SEQUENCE [LARGE SCALE GENOMIC DNA]</scope>
    <source>
        <strain>C58 / ATCC 33970</strain>
    </source>
</reference>
<organism>
    <name type="scientific">Agrobacterium fabrum (strain C58 / ATCC 33970)</name>
    <name type="common">Agrobacterium tumefaciens (strain C58)</name>
    <dbReference type="NCBI Taxonomy" id="176299"/>
    <lineage>
        <taxon>Bacteria</taxon>
        <taxon>Pseudomonadati</taxon>
        <taxon>Pseudomonadota</taxon>
        <taxon>Alphaproteobacteria</taxon>
        <taxon>Hyphomicrobiales</taxon>
        <taxon>Rhizobiaceae</taxon>
        <taxon>Rhizobium/Agrobacterium group</taxon>
        <taxon>Agrobacterium</taxon>
        <taxon>Agrobacterium tumefaciens complex</taxon>
    </lineage>
</organism>
<sequence length="183" mass="19645">MIVIVGPSGAGKDTLMDYAAAQLSGRPGFHFTRRVITRSCDAGGENHDAVSMHEFNQLEDAGAFAVSWQAHGLKYGIPAAVYRHLEAGDVVIANGSRSALPHFGTAFSRLKVVNIVARPDVLARRLEQRGRESRDDILRRLERSSLAVAGDFDVTTVDNSGAIEDAGKTIMQVLQQSAGSSQP</sequence>
<evidence type="ECO:0000255" key="1">
    <source>
        <dbReference type="HAMAP-Rule" id="MF_00836"/>
    </source>
</evidence>
<comment type="function">
    <text evidence="1">Catalyzes the phosphorylation of ribose 1,5-bisphosphate to 5-phospho-D-ribosyl alpha-1-diphosphate (PRPP).</text>
</comment>
<comment type="catalytic activity">
    <reaction evidence="1">
        <text>alpha-D-ribose 1,5-bisphosphate + ATP = 5-phospho-alpha-D-ribose 1-diphosphate + ADP</text>
        <dbReference type="Rhea" id="RHEA:20109"/>
        <dbReference type="ChEBI" id="CHEBI:30616"/>
        <dbReference type="ChEBI" id="CHEBI:58017"/>
        <dbReference type="ChEBI" id="CHEBI:68688"/>
        <dbReference type="ChEBI" id="CHEBI:456216"/>
        <dbReference type="EC" id="2.7.4.23"/>
    </reaction>
</comment>
<comment type="pathway">
    <text evidence="1">Metabolic intermediate biosynthesis; 5-phospho-alpha-D-ribose 1-diphosphate biosynthesis; 5-phospho-alpha-D-ribose 1-diphosphate from D-ribose 5-phosphate (route II): step 3/3.</text>
</comment>
<comment type="similarity">
    <text evidence="1">Belongs to the ribose 1,5-bisphosphokinase family.</text>
</comment>
<keyword id="KW-0067">ATP-binding</keyword>
<keyword id="KW-0547">Nucleotide-binding</keyword>
<keyword id="KW-1185">Reference proteome</keyword>
<keyword id="KW-0808">Transferase</keyword>
<protein>
    <recommendedName>
        <fullName evidence="1">Ribose 1,5-bisphosphate phosphokinase PhnN</fullName>
        <ecNumber evidence="1">2.7.4.23</ecNumber>
    </recommendedName>
    <alternativeName>
        <fullName evidence="1">Ribose 1,5-bisphosphokinase</fullName>
    </alternativeName>
</protein>